<proteinExistence type="evidence at protein level"/>
<organism>
    <name type="scientific">Rhodobacter capsulatus (strain ATCC BAA-309 / NBRC 16581 / SB1003)</name>
    <dbReference type="NCBI Taxonomy" id="272942"/>
    <lineage>
        <taxon>Bacteria</taxon>
        <taxon>Pseudomonadati</taxon>
        <taxon>Pseudomonadota</taxon>
        <taxon>Alphaproteobacteria</taxon>
        <taxon>Rhodobacterales</taxon>
        <taxon>Rhodobacter group</taxon>
        <taxon>Rhodobacter</taxon>
    </lineage>
</organism>
<name>CY1_RHOCB</name>
<reference key="1">
    <citation type="journal article" date="1987" name="J. Mol. Biol.">
        <title>Primary structure of the bc1 complex of Rhodopseudomonas capsulata. Nucleotide sequence of the pet operon encoding the Rieske cytochrome b, and cytochrome c1 apoproteins.</title>
        <authorList>
            <person name="Davidson E."/>
            <person name="Daldal F."/>
        </authorList>
    </citation>
    <scope>NUCLEOTIDE SEQUENCE [GENOMIC DNA]</scope>
    <source>
        <strain>ATCC BAA-309 / NBRC 16581 / SB1003</strain>
    </source>
</reference>
<reference key="2">
    <citation type="journal article" date="2010" name="J. Bacteriol.">
        <title>Complete genome sequence of the photosynthetic purple nonsulfur bacterium Rhodobacter capsulatus SB 1003.</title>
        <authorList>
            <person name="Strnad H."/>
            <person name="Lapidus A."/>
            <person name="Paces J."/>
            <person name="Ulbrich P."/>
            <person name="Vlcek C."/>
            <person name="Paces V."/>
            <person name="Haselkorn R."/>
        </authorList>
    </citation>
    <scope>NUCLEOTIDE SEQUENCE [LARGE SCALE GENOMIC DNA]</scope>
    <source>
        <strain>ATCC BAA-309 / NBRC 16581 / SB1003</strain>
    </source>
</reference>
<evidence type="ECO:0000250" key="1"/>
<evidence type="ECO:0000255" key="2"/>
<evidence type="ECO:0000255" key="3">
    <source>
        <dbReference type="PROSITE-ProRule" id="PRU00433"/>
    </source>
</evidence>
<evidence type="ECO:0000305" key="4"/>
<evidence type="ECO:0007829" key="5">
    <source>
        <dbReference type="PDB" id="6XI0"/>
    </source>
</evidence>
<feature type="signal peptide" evidence="1">
    <location>
        <begin position="1"/>
        <end position="21"/>
    </location>
</feature>
<feature type="chain" id="PRO_0000409866" description="Cytochrome c1">
    <location>
        <begin position="22"/>
        <end position="279"/>
    </location>
</feature>
<feature type="transmembrane region" description="Helical; Note=Anchors to the membrane" evidence="2">
    <location>
        <begin position="248"/>
        <end position="266"/>
    </location>
</feature>
<feature type="binding site" description="covalent" evidence="3">
    <location>
        <position position="55"/>
    </location>
    <ligand>
        <name>heme c</name>
        <dbReference type="ChEBI" id="CHEBI:61717"/>
    </ligand>
</feature>
<feature type="binding site" description="covalent" evidence="3">
    <location>
        <position position="58"/>
    </location>
    <ligand>
        <name>heme c</name>
        <dbReference type="ChEBI" id="CHEBI:61717"/>
    </ligand>
</feature>
<feature type="binding site" description="axial binding residue" evidence="3">
    <location>
        <position position="59"/>
    </location>
    <ligand>
        <name>heme c</name>
        <dbReference type="ChEBI" id="CHEBI:61717"/>
    </ligand>
    <ligandPart>
        <name>Fe</name>
        <dbReference type="ChEBI" id="CHEBI:18248"/>
    </ligandPart>
</feature>
<feature type="binding site" description="axial binding residue" evidence="3">
    <location>
        <position position="204"/>
    </location>
    <ligand>
        <name>heme c</name>
        <dbReference type="ChEBI" id="CHEBI:61717"/>
    </ligand>
    <ligandPart>
        <name>Fe</name>
        <dbReference type="ChEBI" id="CHEBI:18248"/>
    </ligandPart>
</feature>
<feature type="strand" evidence="5">
    <location>
        <begin position="31"/>
        <end position="35"/>
    </location>
</feature>
<feature type="helix" evidence="5">
    <location>
        <begin position="41"/>
        <end position="53"/>
    </location>
</feature>
<feature type="helix" evidence="5">
    <location>
        <begin position="55"/>
        <end position="57"/>
    </location>
</feature>
<feature type="helix" evidence="5">
    <location>
        <begin position="66"/>
        <end position="69"/>
    </location>
</feature>
<feature type="helix" evidence="5">
    <location>
        <begin position="79"/>
        <end position="87"/>
    </location>
</feature>
<feature type="strand" evidence="5">
    <location>
        <begin position="95"/>
        <end position="97"/>
    </location>
</feature>
<feature type="strand" evidence="5">
    <location>
        <begin position="114"/>
        <end position="116"/>
    </location>
</feature>
<feature type="turn" evidence="5">
    <location>
        <begin position="124"/>
        <end position="126"/>
    </location>
</feature>
<feature type="helix" evidence="5">
    <location>
        <begin position="149"/>
        <end position="156"/>
    </location>
</feature>
<feature type="strand" evidence="5">
    <location>
        <begin position="174"/>
        <end position="178"/>
    </location>
</feature>
<feature type="strand" evidence="5">
    <location>
        <begin position="181"/>
        <end position="183"/>
    </location>
</feature>
<feature type="turn" evidence="5">
    <location>
        <begin position="186"/>
        <end position="188"/>
    </location>
</feature>
<feature type="strand" evidence="5">
    <location>
        <begin position="197"/>
        <end position="204"/>
    </location>
</feature>
<feature type="helix" evidence="5">
    <location>
        <begin position="223"/>
        <end position="238"/>
    </location>
</feature>
<feature type="helix" evidence="5">
    <location>
        <begin position="242"/>
        <end position="270"/>
    </location>
</feature>
<accession>D5ANZ4</accession>
<accession>P07058</accession>
<accession>P08501</accession>
<sequence>MKKLLISAVSALVLGSGAAFANSNVPDHAFSFEGIFGKYDQAQLRRGFQVYNEVCSACHGMKFVPIRTLADDGGPQLDPTFVREYAAGLDTIIDKDSGEERDRKETDMFPTRVGDGMGPDLSVMAKARAGFSGPAGSGMNQLFKGMGGPEYIYNYVIGFEENPECAPEGIDGYYYNKTFQIGGVPDTCKDAAGVKITHGSWARMPPPLVDDQVTYEDGTPATVDQMAQDVSAFLMWAAEPKLVARKQMGLVAMVMLGLLSVMLYLTNKRLWAPYKGHKA</sequence>
<keyword id="KW-0002">3D-structure</keyword>
<keyword id="KW-1003">Cell membrane</keyword>
<keyword id="KW-0249">Electron transport</keyword>
<keyword id="KW-0349">Heme</keyword>
<keyword id="KW-0408">Iron</keyword>
<keyword id="KW-0472">Membrane</keyword>
<keyword id="KW-0479">Metal-binding</keyword>
<keyword id="KW-1185">Reference proteome</keyword>
<keyword id="KW-0679">Respiratory chain</keyword>
<keyword id="KW-0732">Signal</keyword>
<keyword id="KW-0812">Transmembrane</keyword>
<keyword id="KW-1133">Transmembrane helix</keyword>
<keyword id="KW-0813">Transport</keyword>
<comment type="function">
    <text>Component of the ubiquinol-cytochrome c reductase complex (complex III or cytochrome b-c1 complex), which is a respiratory chain that generates an electrochemical potential coupled to ATP synthesis. c1 functions as an electron donor to cytochrome c.</text>
</comment>
<comment type="subunit">
    <text>The main subunits of complex b-c1 are: cytochrome b, cytochrome c1 and the Rieske protein.</text>
</comment>
<comment type="subcellular location">
    <subcellularLocation>
        <location evidence="4">Cell membrane</location>
        <topology evidence="4">Single-pass membrane protein</topology>
    </subcellularLocation>
</comment>
<comment type="PTM">
    <text>Binds 1 heme c group covalently per subunit.</text>
</comment>
<protein>
    <recommendedName>
        <fullName>Cytochrome c1</fullName>
    </recommendedName>
</protein>
<gene>
    <name type="primary">petC</name>
    <name type="ordered locus">RCAP_rcc02770</name>
</gene>
<dbReference type="EMBL" id="X05630">
    <property type="protein sequence ID" value="CAA29118.1"/>
    <property type="molecule type" value="Genomic_DNA"/>
</dbReference>
<dbReference type="EMBL" id="CP001312">
    <property type="protein sequence ID" value="ADE86499.1"/>
    <property type="molecule type" value="Genomic_DNA"/>
</dbReference>
<dbReference type="PIR" id="C29336">
    <property type="entry name" value="C29336"/>
</dbReference>
<dbReference type="PDB" id="6XI0">
    <property type="method" value="EM"/>
    <property type="resolution" value="3.30 A"/>
    <property type="chains" value="D/Q=1-279"/>
</dbReference>
<dbReference type="PDB" id="6XKT">
    <property type="method" value="EM"/>
    <property type="resolution" value="3.75 A"/>
    <property type="chains" value="D/Q=1-279"/>
</dbReference>
<dbReference type="PDB" id="6XKU">
    <property type="method" value="EM"/>
    <property type="resolution" value="4.20 A"/>
    <property type="chains" value="D/Q=1-279"/>
</dbReference>
<dbReference type="PDB" id="6XKV">
    <property type="method" value="EM"/>
    <property type="resolution" value="3.50 A"/>
    <property type="chains" value="D/Q=1-279"/>
</dbReference>
<dbReference type="PDB" id="6XKW">
    <property type="method" value="EM"/>
    <property type="resolution" value="5.20 A"/>
    <property type="chains" value="D/Q=1-279"/>
</dbReference>
<dbReference type="PDB" id="6XKX">
    <property type="method" value="EM"/>
    <property type="resolution" value="6.10 A"/>
    <property type="chains" value="D/Q=1-279"/>
</dbReference>
<dbReference type="PDB" id="6XKZ">
    <property type="method" value="EM"/>
    <property type="resolution" value="7.20 A"/>
    <property type="chains" value="D/Q=1-279"/>
</dbReference>
<dbReference type="PDBsum" id="6XI0"/>
<dbReference type="PDBsum" id="6XKT"/>
<dbReference type="PDBsum" id="6XKU"/>
<dbReference type="PDBsum" id="6XKV"/>
<dbReference type="PDBsum" id="6XKW"/>
<dbReference type="PDBsum" id="6XKX"/>
<dbReference type="PDBsum" id="6XKZ"/>
<dbReference type="EMDB" id="EMD-22189"/>
<dbReference type="EMDB" id="EMD-22224"/>
<dbReference type="EMDB" id="EMD-22225"/>
<dbReference type="EMDB" id="EMD-22226"/>
<dbReference type="EMDB" id="EMD-22227"/>
<dbReference type="EMDB" id="EMD-22228"/>
<dbReference type="EMDB" id="EMD-22230"/>
<dbReference type="SMR" id="D5ANZ4"/>
<dbReference type="STRING" id="272942.RCAP_rcc02770"/>
<dbReference type="TCDB" id="3.D.3.1.2">
    <property type="family name" value="the proton-translocating quinol:cytochrome c reductase (qcr) superfamily"/>
</dbReference>
<dbReference type="KEGG" id="rcp:RCAP_rcc02770"/>
<dbReference type="eggNOG" id="COG2857">
    <property type="taxonomic scope" value="Bacteria"/>
</dbReference>
<dbReference type="HOGENOM" id="CLU_040334_1_2_5"/>
<dbReference type="OrthoDB" id="9808471at2"/>
<dbReference type="Proteomes" id="UP000002361">
    <property type="component" value="Chromosome"/>
</dbReference>
<dbReference type="GO" id="GO:0005886">
    <property type="term" value="C:plasma membrane"/>
    <property type="evidence" value="ECO:0007669"/>
    <property type="project" value="UniProtKB-SubCell"/>
</dbReference>
<dbReference type="GO" id="GO:0009055">
    <property type="term" value="F:electron transfer activity"/>
    <property type="evidence" value="ECO:0007669"/>
    <property type="project" value="InterPro"/>
</dbReference>
<dbReference type="GO" id="GO:0020037">
    <property type="term" value="F:heme binding"/>
    <property type="evidence" value="ECO:0007669"/>
    <property type="project" value="InterPro"/>
</dbReference>
<dbReference type="GO" id="GO:0046872">
    <property type="term" value="F:metal ion binding"/>
    <property type="evidence" value="ECO:0007669"/>
    <property type="project" value="UniProtKB-KW"/>
</dbReference>
<dbReference type="Gene3D" id="1.10.760.10">
    <property type="entry name" value="Cytochrome c-like domain"/>
    <property type="match status" value="1"/>
</dbReference>
<dbReference type="Gene3D" id="1.20.5.100">
    <property type="entry name" value="Cytochrome c1, transmembrane anchor, C-terminal"/>
    <property type="match status" value="1"/>
</dbReference>
<dbReference type="InterPro" id="IPR009056">
    <property type="entry name" value="Cyt_c-like_dom"/>
</dbReference>
<dbReference type="InterPro" id="IPR036909">
    <property type="entry name" value="Cyt_c-like_dom_sf"/>
</dbReference>
<dbReference type="InterPro" id="IPR002326">
    <property type="entry name" value="Cyt_c1"/>
</dbReference>
<dbReference type="PANTHER" id="PTHR10266">
    <property type="entry name" value="CYTOCHROME C1"/>
    <property type="match status" value="1"/>
</dbReference>
<dbReference type="PANTHER" id="PTHR10266:SF3">
    <property type="entry name" value="CYTOCHROME C1, HEME PROTEIN, MITOCHONDRIAL"/>
    <property type="match status" value="1"/>
</dbReference>
<dbReference type="Pfam" id="PF02167">
    <property type="entry name" value="Cytochrom_C1"/>
    <property type="match status" value="1"/>
</dbReference>
<dbReference type="PRINTS" id="PR00603">
    <property type="entry name" value="CYTOCHROMEC1"/>
</dbReference>
<dbReference type="SUPFAM" id="SSF46626">
    <property type="entry name" value="Cytochrome c"/>
    <property type="match status" value="1"/>
</dbReference>
<dbReference type="PROSITE" id="PS51007">
    <property type="entry name" value="CYTC"/>
    <property type="match status" value="1"/>
</dbReference>